<reference key="1">
    <citation type="journal article" date="2001" name="Science">
        <title>Comparative genomics of Listeria species.</title>
        <authorList>
            <person name="Glaser P."/>
            <person name="Frangeul L."/>
            <person name="Buchrieser C."/>
            <person name="Rusniok C."/>
            <person name="Amend A."/>
            <person name="Baquero F."/>
            <person name="Berche P."/>
            <person name="Bloecker H."/>
            <person name="Brandt P."/>
            <person name="Chakraborty T."/>
            <person name="Charbit A."/>
            <person name="Chetouani F."/>
            <person name="Couve E."/>
            <person name="de Daruvar A."/>
            <person name="Dehoux P."/>
            <person name="Domann E."/>
            <person name="Dominguez-Bernal G."/>
            <person name="Duchaud E."/>
            <person name="Durant L."/>
            <person name="Dussurget O."/>
            <person name="Entian K.-D."/>
            <person name="Fsihi H."/>
            <person name="Garcia-del Portillo F."/>
            <person name="Garrido P."/>
            <person name="Gautier L."/>
            <person name="Goebel W."/>
            <person name="Gomez-Lopez N."/>
            <person name="Hain T."/>
            <person name="Hauf J."/>
            <person name="Jackson D."/>
            <person name="Jones L.-M."/>
            <person name="Kaerst U."/>
            <person name="Kreft J."/>
            <person name="Kuhn M."/>
            <person name="Kunst F."/>
            <person name="Kurapkat G."/>
            <person name="Madueno E."/>
            <person name="Maitournam A."/>
            <person name="Mata Vicente J."/>
            <person name="Ng E."/>
            <person name="Nedjari H."/>
            <person name="Nordsiek G."/>
            <person name="Novella S."/>
            <person name="de Pablos B."/>
            <person name="Perez-Diaz J.-C."/>
            <person name="Purcell R."/>
            <person name="Remmel B."/>
            <person name="Rose M."/>
            <person name="Schlueter T."/>
            <person name="Simoes N."/>
            <person name="Tierrez A."/>
            <person name="Vazquez-Boland J.-A."/>
            <person name="Voss H."/>
            <person name="Wehland J."/>
            <person name="Cossart P."/>
        </authorList>
    </citation>
    <scope>NUCLEOTIDE SEQUENCE [LARGE SCALE GENOMIC DNA]</scope>
    <source>
        <strain>ATCC BAA-680 / CLIP 11262</strain>
    </source>
</reference>
<gene>
    <name evidence="1" type="primary">rplJ</name>
    <name type="ordered locus">lin0282</name>
</gene>
<comment type="function">
    <text evidence="1">Forms part of the ribosomal stalk, playing a central role in the interaction of the ribosome with GTP-bound translation factors.</text>
</comment>
<comment type="subunit">
    <text evidence="1">Part of the ribosomal stalk of the 50S ribosomal subunit. The N-terminus interacts with L11 and the large rRNA to form the base of the stalk. The C-terminus forms an elongated spine to which L12 dimers bind in a sequential fashion forming a multimeric L10(L12)X complex.</text>
</comment>
<comment type="similarity">
    <text evidence="1">Belongs to the universal ribosomal protein uL10 family.</text>
</comment>
<organism>
    <name type="scientific">Listeria innocua serovar 6a (strain ATCC BAA-680 / CLIP 11262)</name>
    <dbReference type="NCBI Taxonomy" id="272626"/>
    <lineage>
        <taxon>Bacteria</taxon>
        <taxon>Bacillati</taxon>
        <taxon>Bacillota</taxon>
        <taxon>Bacilli</taxon>
        <taxon>Bacillales</taxon>
        <taxon>Listeriaceae</taxon>
        <taxon>Listeria</taxon>
    </lineage>
</organism>
<sequence length="166" mass="17693">MSKVLEAKQSAVEEIKTKLSASASTVIVDYRGLNVGEITDLRKQLRDAGIEFKVYKNSLTRRAVEANGYEGLEGALTGPNAIAFSNEDVVAPAKILNDFAKDHEALEIKAGVIEGKVASLEEIKALATLPSREGLLSMLCNVLQAPVRGLAIATKAVADQKEGQEA</sequence>
<name>RL10_LISIN</name>
<keyword id="KW-0687">Ribonucleoprotein</keyword>
<keyword id="KW-0689">Ribosomal protein</keyword>
<keyword id="KW-0694">RNA-binding</keyword>
<keyword id="KW-0699">rRNA-binding</keyword>
<evidence type="ECO:0000255" key="1">
    <source>
        <dbReference type="HAMAP-Rule" id="MF_00362"/>
    </source>
</evidence>
<evidence type="ECO:0000305" key="2"/>
<protein>
    <recommendedName>
        <fullName evidence="1">Large ribosomal subunit protein uL10</fullName>
    </recommendedName>
    <alternativeName>
        <fullName evidence="2">50S ribosomal protein L10</fullName>
    </alternativeName>
</protein>
<proteinExistence type="inferred from homology"/>
<accession>P66043</accession>
<accession>Q92F25</accession>
<feature type="chain" id="PRO_0000154657" description="Large ribosomal subunit protein uL10">
    <location>
        <begin position="1"/>
        <end position="166"/>
    </location>
</feature>
<dbReference type="EMBL" id="AL596164">
    <property type="protein sequence ID" value="CAC95515.1"/>
    <property type="molecule type" value="Genomic_DNA"/>
</dbReference>
<dbReference type="PIR" id="AC1468">
    <property type="entry name" value="AC1468"/>
</dbReference>
<dbReference type="RefSeq" id="WP_003732833.1">
    <property type="nucleotide sequence ID" value="NC_003212.1"/>
</dbReference>
<dbReference type="SMR" id="P66043"/>
<dbReference type="STRING" id="272626.gene:17564609"/>
<dbReference type="GeneID" id="93233732"/>
<dbReference type="KEGG" id="lin:rplJ"/>
<dbReference type="eggNOG" id="COG0244">
    <property type="taxonomic scope" value="Bacteria"/>
</dbReference>
<dbReference type="HOGENOM" id="CLU_092227_2_0_9"/>
<dbReference type="OrthoDB" id="9808307at2"/>
<dbReference type="Proteomes" id="UP000002513">
    <property type="component" value="Chromosome"/>
</dbReference>
<dbReference type="GO" id="GO:0015934">
    <property type="term" value="C:large ribosomal subunit"/>
    <property type="evidence" value="ECO:0007669"/>
    <property type="project" value="InterPro"/>
</dbReference>
<dbReference type="GO" id="GO:0070180">
    <property type="term" value="F:large ribosomal subunit rRNA binding"/>
    <property type="evidence" value="ECO:0007669"/>
    <property type="project" value="UniProtKB-UniRule"/>
</dbReference>
<dbReference type="GO" id="GO:0003735">
    <property type="term" value="F:structural constituent of ribosome"/>
    <property type="evidence" value="ECO:0007669"/>
    <property type="project" value="InterPro"/>
</dbReference>
<dbReference type="GO" id="GO:0006412">
    <property type="term" value="P:translation"/>
    <property type="evidence" value="ECO:0007669"/>
    <property type="project" value="UniProtKB-UniRule"/>
</dbReference>
<dbReference type="CDD" id="cd05797">
    <property type="entry name" value="Ribosomal_L10"/>
    <property type="match status" value="1"/>
</dbReference>
<dbReference type="FunFam" id="3.30.70.1730:FF:000001">
    <property type="entry name" value="50S ribosomal protein L10"/>
    <property type="match status" value="1"/>
</dbReference>
<dbReference type="Gene3D" id="3.30.70.1730">
    <property type="match status" value="1"/>
</dbReference>
<dbReference type="HAMAP" id="MF_00362">
    <property type="entry name" value="Ribosomal_uL10"/>
    <property type="match status" value="1"/>
</dbReference>
<dbReference type="InterPro" id="IPR001790">
    <property type="entry name" value="Ribosomal_uL10"/>
</dbReference>
<dbReference type="InterPro" id="IPR043141">
    <property type="entry name" value="Ribosomal_uL10-like_sf"/>
</dbReference>
<dbReference type="InterPro" id="IPR022973">
    <property type="entry name" value="Ribosomal_uL10_bac"/>
</dbReference>
<dbReference type="InterPro" id="IPR047865">
    <property type="entry name" value="Ribosomal_uL10_bac_type"/>
</dbReference>
<dbReference type="InterPro" id="IPR002363">
    <property type="entry name" value="Ribosomal_uL10_CS_bac"/>
</dbReference>
<dbReference type="NCBIfam" id="NF000955">
    <property type="entry name" value="PRK00099.1-1"/>
    <property type="match status" value="1"/>
</dbReference>
<dbReference type="PANTHER" id="PTHR11560">
    <property type="entry name" value="39S RIBOSOMAL PROTEIN L10, MITOCHONDRIAL"/>
    <property type="match status" value="1"/>
</dbReference>
<dbReference type="Pfam" id="PF00466">
    <property type="entry name" value="Ribosomal_L10"/>
    <property type="match status" value="1"/>
</dbReference>
<dbReference type="SUPFAM" id="SSF160369">
    <property type="entry name" value="Ribosomal protein L10-like"/>
    <property type="match status" value="1"/>
</dbReference>
<dbReference type="PROSITE" id="PS01109">
    <property type="entry name" value="RIBOSOMAL_L10"/>
    <property type="match status" value="1"/>
</dbReference>